<protein>
    <recommendedName>
        <fullName evidence="1">ATP synthase gamma chain</fullName>
    </recommendedName>
    <alternativeName>
        <fullName evidence="1">ATP synthase F1 sector gamma subunit</fullName>
    </alternativeName>
    <alternativeName>
        <fullName evidence="1">F-ATPase gamma subunit</fullName>
    </alternativeName>
</protein>
<evidence type="ECO:0000255" key="1">
    <source>
        <dbReference type="HAMAP-Rule" id="MF_00815"/>
    </source>
</evidence>
<name>ATPG_SPHAL</name>
<keyword id="KW-0066">ATP synthesis</keyword>
<keyword id="KW-0997">Cell inner membrane</keyword>
<keyword id="KW-1003">Cell membrane</keyword>
<keyword id="KW-0139">CF(1)</keyword>
<keyword id="KW-0375">Hydrogen ion transport</keyword>
<keyword id="KW-0406">Ion transport</keyword>
<keyword id="KW-0472">Membrane</keyword>
<keyword id="KW-1185">Reference proteome</keyword>
<keyword id="KW-0813">Transport</keyword>
<comment type="function">
    <text evidence="1">Produces ATP from ADP in the presence of a proton gradient across the membrane. The gamma chain is believed to be important in regulating ATPase activity and the flow of protons through the CF(0) complex.</text>
</comment>
<comment type="subunit">
    <text evidence="1">F-type ATPases have 2 components, CF(1) - the catalytic core - and CF(0) - the membrane proton channel. CF(1) has five subunits: alpha(3), beta(3), gamma(1), delta(1), epsilon(1). CF(0) has three main subunits: a, b and c.</text>
</comment>
<comment type="subcellular location">
    <subcellularLocation>
        <location evidence="1">Cell inner membrane</location>
        <topology evidence="1">Peripheral membrane protein</topology>
    </subcellularLocation>
</comment>
<comment type="similarity">
    <text evidence="1">Belongs to the ATPase gamma chain family.</text>
</comment>
<accession>Q1GQS6</accession>
<proteinExistence type="inferred from homology"/>
<organism>
    <name type="scientific">Sphingopyxis alaskensis (strain DSM 13593 / LMG 18877 / RB2256)</name>
    <name type="common">Sphingomonas alaskensis</name>
    <dbReference type="NCBI Taxonomy" id="317655"/>
    <lineage>
        <taxon>Bacteria</taxon>
        <taxon>Pseudomonadati</taxon>
        <taxon>Pseudomonadota</taxon>
        <taxon>Alphaproteobacteria</taxon>
        <taxon>Sphingomonadales</taxon>
        <taxon>Sphingomonadaceae</taxon>
        <taxon>Sphingopyxis</taxon>
    </lineage>
</organism>
<sequence>MASLKELKGRIVSVKSTQKITKAKKMVAAAKLRKAQAAAEAARPYAERLEGVVASLASKVGASDSAPKLLSGTGKSDTHLLVVLNSDRGLAGAFNSNIVKAARDKALELQSQGKKVLFYLVGRKGRPVIARLFPGQIIEQYDTTGIRDIGFDQASEISARVMELYEAGAFDVAHLFYSKFRSALLQIATGQQMIPVPPPAEAPASSGAAVEYEPGEEEILADLLPRNVTIQIFKGLLENAASEQGASMTAMDNATRNAGELINKLTIIYNRTRQAAITTELIEIIAGAEAL</sequence>
<feature type="chain" id="PRO_1000053343" description="ATP synthase gamma chain">
    <location>
        <begin position="1"/>
        <end position="291"/>
    </location>
</feature>
<gene>
    <name evidence="1" type="primary">atpG</name>
    <name type="ordered locus">Sala_2287</name>
</gene>
<dbReference type="EMBL" id="CP000356">
    <property type="protein sequence ID" value="ABF53996.1"/>
    <property type="molecule type" value="Genomic_DNA"/>
</dbReference>
<dbReference type="RefSeq" id="WP_011542572.1">
    <property type="nucleotide sequence ID" value="NC_008048.1"/>
</dbReference>
<dbReference type="SMR" id="Q1GQS6"/>
<dbReference type="STRING" id="317655.Sala_2287"/>
<dbReference type="KEGG" id="sal:Sala_2287"/>
<dbReference type="eggNOG" id="COG0224">
    <property type="taxonomic scope" value="Bacteria"/>
</dbReference>
<dbReference type="HOGENOM" id="CLU_050669_0_1_5"/>
<dbReference type="OrthoDB" id="9812769at2"/>
<dbReference type="Proteomes" id="UP000006578">
    <property type="component" value="Chromosome"/>
</dbReference>
<dbReference type="GO" id="GO:0005886">
    <property type="term" value="C:plasma membrane"/>
    <property type="evidence" value="ECO:0007669"/>
    <property type="project" value="UniProtKB-SubCell"/>
</dbReference>
<dbReference type="GO" id="GO:0045259">
    <property type="term" value="C:proton-transporting ATP synthase complex"/>
    <property type="evidence" value="ECO:0007669"/>
    <property type="project" value="UniProtKB-KW"/>
</dbReference>
<dbReference type="GO" id="GO:0005524">
    <property type="term" value="F:ATP binding"/>
    <property type="evidence" value="ECO:0007669"/>
    <property type="project" value="UniProtKB-UniRule"/>
</dbReference>
<dbReference type="GO" id="GO:0046933">
    <property type="term" value="F:proton-transporting ATP synthase activity, rotational mechanism"/>
    <property type="evidence" value="ECO:0007669"/>
    <property type="project" value="UniProtKB-UniRule"/>
</dbReference>
<dbReference type="GO" id="GO:0042777">
    <property type="term" value="P:proton motive force-driven plasma membrane ATP synthesis"/>
    <property type="evidence" value="ECO:0007669"/>
    <property type="project" value="UniProtKB-UniRule"/>
</dbReference>
<dbReference type="CDD" id="cd12151">
    <property type="entry name" value="F1-ATPase_gamma"/>
    <property type="match status" value="1"/>
</dbReference>
<dbReference type="FunFam" id="1.10.287.80:FF:000001">
    <property type="entry name" value="ATP synthase gamma chain"/>
    <property type="match status" value="1"/>
</dbReference>
<dbReference type="Gene3D" id="3.40.1380.10">
    <property type="match status" value="1"/>
</dbReference>
<dbReference type="Gene3D" id="1.10.287.80">
    <property type="entry name" value="ATP synthase, gamma subunit, helix hairpin domain"/>
    <property type="match status" value="1"/>
</dbReference>
<dbReference type="HAMAP" id="MF_00815">
    <property type="entry name" value="ATP_synth_gamma_bact"/>
    <property type="match status" value="1"/>
</dbReference>
<dbReference type="InterPro" id="IPR035968">
    <property type="entry name" value="ATP_synth_F1_ATPase_gsu"/>
</dbReference>
<dbReference type="InterPro" id="IPR000131">
    <property type="entry name" value="ATP_synth_F1_gsu"/>
</dbReference>
<dbReference type="InterPro" id="IPR023632">
    <property type="entry name" value="ATP_synth_F1_gsu_CS"/>
</dbReference>
<dbReference type="NCBIfam" id="TIGR01146">
    <property type="entry name" value="ATPsyn_F1gamma"/>
    <property type="match status" value="1"/>
</dbReference>
<dbReference type="NCBIfam" id="NF004146">
    <property type="entry name" value="PRK05621.1-4"/>
    <property type="match status" value="1"/>
</dbReference>
<dbReference type="PANTHER" id="PTHR11693">
    <property type="entry name" value="ATP SYNTHASE GAMMA CHAIN"/>
    <property type="match status" value="1"/>
</dbReference>
<dbReference type="PANTHER" id="PTHR11693:SF22">
    <property type="entry name" value="ATP SYNTHASE SUBUNIT GAMMA, MITOCHONDRIAL"/>
    <property type="match status" value="1"/>
</dbReference>
<dbReference type="Pfam" id="PF00231">
    <property type="entry name" value="ATP-synt"/>
    <property type="match status" value="1"/>
</dbReference>
<dbReference type="PIRSF" id="PIRSF039089">
    <property type="entry name" value="ATP_synthase_gamma"/>
    <property type="match status" value="1"/>
</dbReference>
<dbReference type="PRINTS" id="PR00126">
    <property type="entry name" value="ATPASEGAMMA"/>
</dbReference>
<dbReference type="SUPFAM" id="SSF52943">
    <property type="entry name" value="ATP synthase (F1-ATPase), gamma subunit"/>
    <property type="match status" value="1"/>
</dbReference>
<dbReference type="PROSITE" id="PS00153">
    <property type="entry name" value="ATPASE_GAMMA"/>
    <property type="match status" value="1"/>
</dbReference>
<reference key="1">
    <citation type="journal article" date="2009" name="Proc. Natl. Acad. Sci. U.S.A.">
        <title>The genomic basis of trophic strategy in marine bacteria.</title>
        <authorList>
            <person name="Lauro F.M."/>
            <person name="McDougald D."/>
            <person name="Thomas T."/>
            <person name="Williams T.J."/>
            <person name="Egan S."/>
            <person name="Rice S."/>
            <person name="DeMaere M.Z."/>
            <person name="Ting L."/>
            <person name="Ertan H."/>
            <person name="Johnson J."/>
            <person name="Ferriera S."/>
            <person name="Lapidus A."/>
            <person name="Anderson I."/>
            <person name="Kyrpides N."/>
            <person name="Munk A.C."/>
            <person name="Detter C."/>
            <person name="Han C.S."/>
            <person name="Brown M.V."/>
            <person name="Robb F.T."/>
            <person name="Kjelleberg S."/>
            <person name="Cavicchioli R."/>
        </authorList>
    </citation>
    <scope>NUCLEOTIDE SEQUENCE [LARGE SCALE GENOMIC DNA]</scope>
    <source>
        <strain>DSM 13593 / LMG 18877 / RB2256</strain>
    </source>
</reference>